<organism>
    <name type="scientific">Neisseria gonorrhoeae (strain ATCC 700825 / FA 1090)</name>
    <dbReference type="NCBI Taxonomy" id="242231"/>
    <lineage>
        <taxon>Bacteria</taxon>
        <taxon>Pseudomonadati</taxon>
        <taxon>Pseudomonadota</taxon>
        <taxon>Betaproteobacteria</taxon>
        <taxon>Neisseriales</taxon>
        <taxon>Neisseriaceae</taxon>
        <taxon>Neisseria</taxon>
    </lineage>
</organism>
<sequence>MSSSVSSKTRYWVLALAAIVLDQWSKWAVLSSFQYRERVNVIPSFFDLTLVYNPGAAFSFLADQGGWQKYFFLVLAVAVSAYLVRAILRDEFAALGKIGAAMIIGGASGNVIDRLIHGHVVDFLLFYWQNWFYPAFNIADSFICVGAVLAVLDNIVHRKDSKKT</sequence>
<accession>Q5FAF3</accession>
<feature type="chain" id="PRO_0000289404" description="Lipoprotein signal peptidase">
    <location>
        <begin position="1"/>
        <end position="164"/>
    </location>
</feature>
<feature type="transmembrane region" description="Helical" evidence="1">
    <location>
        <begin position="11"/>
        <end position="31"/>
    </location>
</feature>
<feature type="transmembrane region" description="Helical" evidence="1">
    <location>
        <begin position="41"/>
        <end position="61"/>
    </location>
</feature>
<feature type="transmembrane region" description="Helical" evidence="1">
    <location>
        <begin position="64"/>
        <end position="84"/>
    </location>
</feature>
<feature type="transmembrane region" description="Helical" evidence="1">
    <location>
        <begin position="92"/>
        <end position="112"/>
    </location>
</feature>
<feature type="transmembrane region" description="Helical" evidence="1">
    <location>
        <begin position="132"/>
        <end position="152"/>
    </location>
</feature>
<feature type="active site" evidence="1">
    <location>
        <position position="122"/>
    </location>
</feature>
<feature type="active site" evidence="1">
    <location>
        <position position="140"/>
    </location>
</feature>
<evidence type="ECO:0000255" key="1">
    <source>
        <dbReference type="HAMAP-Rule" id="MF_00161"/>
    </source>
</evidence>
<keyword id="KW-0064">Aspartyl protease</keyword>
<keyword id="KW-0997">Cell inner membrane</keyword>
<keyword id="KW-1003">Cell membrane</keyword>
<keyword id="KW-0378">Hydrolase</keyword>
<keyword id="KW-0472">Membrane</keyword>
<keyword id="KW-0645">Protease</keyword>
<keyword id="KW-1185">Reference proteome</keyword>
<keyword id="KW-0812">Transmembrane</keyword>
<keyword id="KW-1133">Transmembrane helix</keyword>
<dbReference type="EC" id="3.4.23.36" evidence="1"/>
<dbReference type="EMBL" id="AE004969">
    <property type="protein sequence ID" value="AAW88834.1"/>
    <property type="molecule type" value="Genomic_DNA"/>
</dbReference>
<dbReference type="RefSeq" id="WP_003687321.1">
    <property type="nucleotide sequence ID" value="NC_002946.2"/>
</dbReference>
<dbReference type="RefSeq" id="YP_207246.1">
    <property type="nucleotide sequence ID" value="NC_002946.2"/>
</dbReference>
<dbReference type="SMR" id="Q5FAF3"/>
<dbReference type="STRING" id="242231.NGO_0071"/>
<dbReference type="GeneID" id="66752336"/>
<dbReference type="KEGG" id="ngo:NGO_0071"/>
<dbReference type="PATRIC" id="fig|242231.10.peg.92"/>
<dbReference type="HOGENOM" id="CLU_083252_4_0_4"/>
<dbReference type="UniPathway" id="UPA00665"/>
<dbReference type="Proteomes" id="UP000000535">
    <property type="component" value="Chromosome"/>
</dbReference>
<dbReference type="GO" id="GO:0005886">
    <property type="term" value="C:plasma membrane"/>
    <property type="evidence" value="ECO:0007669"/>
    <property type="project" value="UniProtKB-SubCell"/>
</dbReference>
<dbReference type="GO" id="GO:0004190">
    <property type="term" value="F:aspartic-type endopeptidase activity"/>
    <property type="evidence" value="ECO:0007669"/>
    <property type="project" value="UniProtKB-UniRule"/>
</dbReference>
<dbReference type="GO" id="GO:0006508">
    <property type="term" value="P:proteolysis"/>
    <property type="evidence" value="ECO:0007669"/>
    <property type="project" value="UniProtKB-KW"/>
</dbReference>
<dbReference type="HAMAP" id="MF_00161">
    <property type="entry name" value="LspA"/>
    <property type="match status" value="1"/>
</dbReference>
<dbReference type="InterPro" id="IPR001872">
    <property type="entry name" value="Peptidase_A8"/>
</dbReference>
<dbReference type="NCBIfam" id="TIGR00077">
    <property type="entry name" value="lspA"/>
    <property type="match status" value="1"/>
</dbReference>
<dbReference type="PANTHER" id="PTHR33695">
    <property type="entry name" value="LIPOPROTEIN SIGNAL PEPTIDASE"/>
    <property type="match status" value="1"/>
</dbReference>
<dbReference type="PANTHER" id="PTHR33695:SF1">
    <property type="entry name" value="LIPOPROTEIN SIGNAL PEPTIDASE"/>
    <property type="match status" value="1"/>
</dbReference>
<dbReference type="Pfam" id="PF01252">
    <property type="entry name" value="Peptidase_A8"/>
    <property type="match status" value="1"/>
</dbReference>
<dbReference type="PRINTS" id="PR00781">
    <property type="entry name" value="LIPOSIGPTASE"/>
</dbReference>
<protein>
    <recommendedName>
        <fullName evidence="1">Lipoprotein signal peptidase</fullName>
        <ecNumber evidence="1">3.4.23.36</ecNumber>
    </recommendedName>
    <alternativeName>
        <fullName evidence="1">Prolipoprotein signal peptidase</fullName>
    </alternativeName>
    <alternativeName>
        <fullName evidence="1">Signal peptidase II</fullName>
        <shortName evidence="1">SPase II</shortName>
    </alternativeName>
</protein>
<name>LSPA_NEIG1</name>
<proteinExistence type="inferred from homology"/>
<comment type="function">
    <text evidence="1">This protein specifically catalyzes the removal of signal peptides from prolipoproteins.</text>
</comment>
<comment type="catalytic activity">
    <reaction evidence="1">
        <text>Release of signal peptides from bacterial membrane prolipoproteins. Hydrolyzes -Xaa-Yaa-Zaa-|-(S,diacylglyceryl)Cys-, in which Xaa is hydrophobic (preferably Leu), and Yaa (Ala or Ser) and Zaa (Gly or Ala) have small, neutral side chains.</text>
        <dbReference type="EC" id="3.4.23.36"/>
    </reaction>
</comment>
<comment type="pathway">
    <text evidence="1">Protein modification; lipoprotein biosynthesis (signal peptide cleavage).</text>
</comment>
<comment type="subcellular location">
    <subcellularLocation>
        <location evidence="1">Cell inner membrane</location>
        <topology evidence="1">Multi-pass membrane protein</topology>
    </subcellularLocation>
</comment>
<comment type="similarity">
    <text evidence="1">Belongs to the peptidase A8 family.</text>
</comment>
<gene>
    <name evidence="1" type="primary">lspA</name>
    <name type="ordered locus">NGO_0071</name>
</gene>
<reference key="1">
    <citation type="submission" date="2003-03" db="EMBL/GenBank/DDBJ databases">
        <title>The complete genome sequence of Neisseria gonorrhoeae.</title>
        <authorList>
            <person name="Lewis L.A."/>
            <person name="Gillaspy A.F."/>
            <person name="McLaughlin R.E."/>
            <person name="Gipson M."/>
            <person name="Ducey T.F."/>
            <person name="Ownbey T."/>
            <person name="Hartman K."/>
            <person name="Nydick C."/>
            <person name="Carson M.B."/>
            <person name="Vaughn J."/>
            <person name="Thomson C."/>
            <person name="Song L."/>
            <person name="Lin S."/>
            <person name="Yuan X."/>
            <person name="Najar F."/>
            <person name="Zhan M."/>
            <person name="Ren Q."/>
            <person name="Zhu H."/>
            <person name="Qi S."/>
            <person name="Kenton S.M."/>
            <person name="Lai H."/>
            <person name="White J.D."/>
            <person name="Clifton S."/>
            <person name="Roe B.A."/>
            <person name="Dyer D.W."/>
        </authorList>
    </citation>
    <scope>NUCLEOTIDE SEQUENCE [LARGE SCALE GENOMIC DNA]</scope>
    <source>
        <strain>ATCC 700825 / FA 1090</strain>
    </source>
</reference>